<feature type="chain" id="PRO_0000209904" description="Ectonucleoside triphosphate diphosphohydrolase 1">
    <location>
        <begin position="1"/>
        <end position="511"/>
    </location>
</feature>
<feature type="topological domain" description="Cytoplasmic" evidence="4">
    <location>
        <begin position="1"/>
        <end position="16"/>
    </location>
</feature>
<feature type="transmembrane region" description="Helical" evidence="4">
    <location>
        <begin position="17"/>
        <end position="37"/>
    </location>
</feature>
<feature type="topological domain" description="Extracellular" evidence="4">
    <location>
        <begin position="38"/>
        <end position="478"/>
    </location>
</feature>
<feature type="transmembrane region" description="Helical" evidence="4">
    <location>
        <begin position="479"/>
        <end position="499"/>
    </location>
</feature>
<feature type="topological domain" description="Cytoplasmic" evidence="4">
    <location>
        <begin position="500"/>
        <end position="511"/>
    </location>
</feature>
<feature type="region of interest" description="N-terminal lobe">
    <location>
        <begin position="46"/>
        <end position="171"/>
    </location>
</feature>
<feature type="region of interest" description="C-terminal lobe">
    <location>
        <begin position="205"/>
        <end position="441"/>
    </location>
</feature>
<feature type="active site" description="Proton acceptor" evidence="1">
    <location>
        <position position="174"/>
    </location>
</feature>
<feature type="glycosylation site" description="N-linked (GlcNAc...) asparagine" evidence="4">
    <location>
        <position position="73"/>
    </location>
</feature>
<feature type="glycosylation site" description="N-linked (GlcNAc...) asparagine" evidence="4">
    <location>
        <position position="226"/>
    </location>
</feature>
<feature type="glycosylation site" description="N-linked (GlcNAc...) asparagine" evidence="4">
    <location>
        <position position="291"/>
    </location>
</feature>
<feature type="glycosylation site" description="N-linked (GlcNAc...) asparagine" evidence="4">
    <location>
        <position position="333"/>
    </location>
</feature>
<feature type="glycosylation site" description="N-linked (GlcNAc...) asparagine" evidence="4">
    <location>
        <position position="374"/>
    </location>
</feature>
<feature type="glycosylation site" description="N-linked (GlcNAc...) asparagine" evidence="4">
    <location>
        <position position="429"/>
    </location>
</feature>
<feature type="glycosylation site" description="N-linked (GlcNAc...) asparagine" evidence="4">
    <location>
        <position position="458"/>
    </location>
</feature>
<feature type="disulfide bond" evidence="5">
    <location>
        <begin position="84"/>
        <end position="108"/>
    </location>
</feature>
<feature type="disulfide bond" evidence="5">
    <location>
        <begin position="254"/>
        <end position="300"/>
    </location>
</feature>
<feature type="disulfide bond" evidence="5">
    <location>
        <begin position="281"/>
        <end position="324"/>
    </location>
</feature>
<feature type="disulfide bond" evidence="5">
    <location>
        <begin position="337"/>
        <end position="342"/>
    </location>
</feature>
<feature type="disulfide bond" evidence="5">
    <location>
        <begin position="391"/>
        <end position="414"/>
    </location>
</feature>
<feature type="strand" evidence="16">
    <location>
        <begin position="47"/>
        <end position="55"/>
    </location>
</feature>
<feature type="strand" evidence="16">
    <location>
        <begin position="60"/>
        <end position="68"/>
    </location>
</feature>
<feature type="strand" evidence="16">
    <location>
        <begin position="79"/>
        <end position="85"/>
    </location>
</feature>
<feature type="strand" evidence="16">
    <location>
        <begin position="87"/>
        <end position="89"/>
    </location>
</feature>
<feature type="helix" evidence="16">
    <location>
        <begin position="91"/>
        <end position="94"/>
    </location>
</feature>
<feature type="helix" evidence="16">
    <location>
        <begin position="98"/>
        <end position="100"/>
    </location>
</feature>
<feature type="helix" evidence="16">
    <location>
        <begin position="101"/>
        <end position="115"/>
    </location>
</feature>
<feature type="helix" evidence="16">
    <location>
        <begin position="118"/>
        <end position="121"/>
    </location>
</feature>
<feature type="strand" evidence="16">
    <location>
        <begin position="125"/>
        <end position="130"/>
    </location>
</feature>
<feature type="helix" evidence="16">
    <location>
        <begin position="132"/>
        <end position="140"/>
    </location>
</feature>
<feature type="helix" evidence="16">
    <location>
        <begin position="142"/>
        <end position="157"/>
    </location>
</feature>
<feature type="strand" evidence="16">
    <location>
        <begin position="159"/>
        <end position="168"/>
    </location>
</feature>
<feature type="helix" evidence="16">
    <location>
        <begin position="171"/>
        <end position="185"/>
    </location>
</feature>
<feature type="turn" evidence="16">
    <location>
        <begin position="186"/>
        <end position="189"/>
    </location>
</feature>
<feature type="strand" evidence="16">
    <location>
        <begin position="209"/>
        <end position="213"/>
    </location>
</feature>
<feature type="strand" evidence="16">
    <location>
        <begin position="215"/>
        <end position="222"/>
    </location>
</feature>
<feature type="strand" evidence="16">
    <location>
        <begin position="229"/>
        <end position="231"/>
    </location>
</feature>
<feature type="helix" evidence="16">
    <location>
        <begin position="232"/>
        <end position="234"/>
    </location>
</feature>
<feature type="strand" evidence="16">
    <location>
        <begin position="235"/>
        <end position="240"/>
    </location>
</feature>
<feature type="strand" evidence="16">
    <location>
        <begin position="243"/>
        <end position="253"/>
    </location>
</feature>
<feature type="helix" evidence="16">
    <location>
        <begin position="257"/>
        <end position="268"/>
    </location>
</feature>
<feature type="strand" evidence="16">
    <location>
        <begin position="273"/>
        <end position="279"/>
    </location>
</feature>
<feature type="strand" evidence="16">
    <location>
        <begin position="287"/>
        <end position="291"/>
    </location>
</feature>
<feature type="helix" evidence="16">
    <location>
        <begin position="292"/>
        <end position="295"/>
    </location>
</feature>
<feature type="helix" evidence="16">
    <location>
        <begin position="299"/>
        <end position="304"/>
    </location>
</feature>
<feature type="strand" evidence="16">
    <location>
        <begin position="311"/>
        <end position="317"/>
    </location>
</feature>
<feature type="helix" evidence="16">
    <location>
        <begin position="321"/>
        <end position="329"/>
    </location>
</feature>
<feature type="strand" evidence="16">
    <location>
        <begin position="338"/>
        <end position="344"/>
    </location>
</feature>
<feature type="strand" evidence="16">
    <location>
        <begin position="356"/>
        <end position="360"/>
    </location>
</feature>
<feature type="helix" evidence="16">
    <location>
        <begin position="361"/>
        <end position="372"/>
    </location>
</feature>
<feature type="helix" evidence="16">
    <location>
        <begin position="380"/>
        <end position="391"/>
    </location>
</feature>
<feature type="helix" evidence="16">
    <location>
        <begin position="395"/>
        <end position="401"/>
    </location>
</feature>
<feature type="helix" evidence="16">
    <location>
        <begin position="407"/>
        <end position="410"/>
    </location>
</feature>
<feature type="helix" evidence="16">
    <location>
        <begin position="413"/>
        <end position="425"/>
    </location>
</feature>
<feature type="helix" evidence="16">
    <location>
        <begin position="432"/>
        <end position="437"/>
    </location>
</feature>
<feature type="strand" evidence="16">
    <location>
        <begin position="438"/>
        <end position="440"/>
    </location>
</feature>
<feature type="strand" evidence="16">
    <location>
        <begin position="442"/>
        <end position="444"/>
    </location>
</feature>
<feature type="strand" evidence="15">
    <location>
        <begin position="447"/>
        <end position="451"/>
    </location>
</feature>
<feature type="helix" evidence="16">
    <location>
        <begin position="452"/>
        <end position="459"/>
    </location>
</feature>
<keyword id="KW-0002">3D-structure</keyword>
<keyword id="KW-0067">ATP-binding</keyword>
<keyword id="KW-0106">Calcium</keyword>
<keyword id="KW-1015">Disulfide bond</keyword>
<keyword id="KW-0325">Glycoprotein</keyword>
<keyword id="KW-0378">Hydrolase</keyword>
<keyword id="KW-0460">Magnesium</keyword>
<keyword id="KW-0472">Membrane</keyword>
<keyword id="KW-0547">Nucleotide-binding</keyword>
<keyword id="KW-1185">Reference proteome</keyword>
<keyword id="KW-0812">Transmembrane</keyword>
<keyword id="KW-1133">Transmembrane helix</keyword>
<comment type="function">
    <text evidence="2 5 6 7">Catalyzes the hydrolysis of both di- and triphosphate nucleotides (NDPs and NTPs) and hydrolyze NTPs to nucleotide monophosphates (NMPs) in two distinct successive phosphate-releasing steps, with NDPs as intermediates and participates in the regulation of extracellular levels of nucleotides (PubMed:22100451, PubMed:9221928, PubMed:9364474). By hydrolyzing proinflammatory ATP and platelet-activating ADP to AMP, it blocks platelet aggregation and supports blood flow (By similarity).</text>
</comment>
<comment type="catalytic activity">
    <reaction evidence="5 6 7">
        <text>a ribonucleoside 5'-triphosphate + 2 H2O = a ribonucleoside 5'-phosphate + 2 phosphate + 2 H(+)</text>
        <dbReference type="Rhea" id="RHEA:36795"/>
        <dbReference type="ChEBI" id="CHEBI:15377"/>
        <dbReference type="ChEBI" id="CHEBI:15378"/>
        <dbReference type="ChEBI" id="CHEBI:43474"/>
        <dbReference type="ChEBI" id="CHEBI:58043"/>
        <dbReference type="ChEBI" id="CHEBI:61557"/>
        <dbReference type="EC" id="3.6.1.5"/>
    </reaction>
    <physiologicalReaction direction="left-to-right" evidence="5 6 7">
        <dbReference type="Rhea" id="RHEA:36796"/>
    </physiologicalReaction>
</comment>
<comment type="catalytic activity">
    <reaction evidence="5 6 7">
        <text>a ribonucleoside 5'-triphosphate + H2O = a ribonucleoside 5'-diphosphate + phosphate + H(+)</text>
        <dbReference type="Rhea" id="RHEA:23680"/>
        <dbReference type="ChEBI" id="CHEBI:15377"/>
        <dbReference type="ChEBI" id="CHEBI:15378"/>
        <dbReference type="ChEBI" id="CHEBI:43474"/>
        <dbReference type="ChEBI" id="CHEBI:57930"/>
        <dbReference type="ChEBI" id="CHEBI:61557"/>
    </reaction>
    <physiologicalReaction direction="left-to-right" evidence="5 6 7">
        <dbReference type="Rhea" id="RHEA:23681"/>
    </physiologicalReaction>
</comment>
<comment type="catalytic activity">
    <reaction evidence="5 6 7">
        <text>a ribonucleoside 5'-diphosphate + H2O = a ribonucleoside 5'-phosphate + phosphate + H(+)</text>
        <dbReference type="Rhea" id="RHEA:36799"/>
        <dbReference type="ChEBI" id="CHEBI:15377"/>
        <dbReference type="ChEBI" id="CHEBI:15378"/>
        <dbReference type="ChEBI" id="CHEBI:43474"/>
        <dbReference type="ChEBI" id="CHEBI:57930"/>
        <dbReference type="ChEBI" id="CHEBI:58043"/>
    </reaction>
    <physiologicalReaction direction="left-to-right" evidence="5 6 7">
        <dbReference type="Rhea" id="RHEA:36800"/>
    </physiologicalReaction>
</comment>
<comment type="catalytic activity">
    <reaction evidence="5 6 7">
        <text>ATP + 2 H2O = AMP + 2 phosphate + 2 H(+)</text>
        <dbReference type="Rhea" id="RHEA:20988"/>
        <dbReference type="ChEBI" id="CHEBI:15377"/>
        <dbReference type="ChEBI" id="CHEBI:15378"/>
        <dbReference type="ChEBI" id="CHEBI:30616"/>
        <dbReference type="ChEBI" id="CHEBI:43474"/>
        <dbReference type="ChEBI" id="CHEBI:456215"/>
    </reaction>
    <physiologicalReaction direction="left-to-right" evidence="5 6 7">
        <dbReference type="Rhea" id="RHEA:20989"/>
    </physiologicalReaction>
</comment>
<comment type="catalytic activity">
    <reaction evidence="5 6 7">
        <text>ATP + H2O = ADP + phosphate + H(+)</text>
        <dbReference type="Rhea" id="RHEA:13065"/>
        <dbReference type="ChEBI" id="CHEBI:15377"/>
        <dbReference type="ChEBI" id="CHEBI:15378"/>
        <dbReference type="ChEBI" id="CHEBI:30616"/>
        <dbReference type="ChEBI" id="CHEBI:43474"/>
        <dbReference type="ChEBI" id="CHEBI:456216"/>
    </reaction>
    <physiologicalReaction direction="left-to-right" evidence="5 6 7">
        <dbReference type="Rhea" id="RHEA:13066"/>
    </physiologicalReaction>
</comment>
<comment type="catalytic activity">
    <reaction evidence="5 6 7">
        <text>ADP + H2O = AMP + phosphate + H(+)</text>
        <dbReference type="Rhea" id="RHEA:61436"/>
        <dbReference type="ChEBI" id="CHEBI:15377"/>
        <dbReference type="ChEBI" id="CHEBI:15378"/>
        <dbReference type="ChEBI" id="CHEBI:43474"/>
        <dbReference type="ChEBI" id="CHEBI:456215"/>
        <dbReference type="ChEBI" id="CHEBI:456216"/>
    </reaction>
    <physiologicalReaction direction="left-to-right" evidence="5 6 7">
        <dbReference type="Rhea" id="RHEA:61437"/>
    </physiologicalReaction>
</comment>
<comment type="catalytic activity">
    <reaction evidence="2">
        <text>CTP + 2 H2O = CMP + 2 phosphate + 2 H(+)</text>
        <dbReference type="Rhea" id="RHEA:64908"/>
        <dbReference type="ChEBI" id="CHEBI:15377"/>
        <dbReference type="ChEBI" id="CHEBI:15378"/>
        <dbReference type="ChEBI" id="CHEBI:37563"/>
        <dbReference type="ChEBI" id="CHEBI:43474"/>
        <dbReference type="ChEBI" id="CHEBI:60377"/>
    </reaction>
    <physiologicalReaction direction="left-to-right" evidence="2">
        <dbReference type="Rhea" id="RHEA:64909"/>
    </physiologicalReaction>
</comment>
<comment type="catalytic activity">
    <reaction evidence="2">
        <text>CTP + H2O = CDP + phosphate + H(+)</text>
        <dbReference type="Rhea" id="RHEA:29387"/>
        <dbReference type="ChEBI" id="CHEBI:15377"/>
        <dbReference type="ChEBI" id="CHEBI:15378"/>
        <dbReference type="ChEBI" id="CHEBI:37563"/>
        <dbReference type="ChEBI" id="CHEBI:43474"/>
        <dbReference type="ChEBI" id="CHEBI:58069"/>
    </reaction>
    <physiologicalReaction direction="left-to-right" evidence="2">
        <dbReference type="Rhea" id="RHEA:29388"/>
    </physiologicalReaction>
</comment>
<comment type="catalytic activity">
    <reaction evidence="2">
        <text>CDP + H2O = CMP + phosphate + H(+)</text>
        <dbReference type="Rhea" id="RHEA:64880"/>
        <dbReference type="ChEBI" id="CHEBI:15377"/>
        <dbReference type="ChEBI" id="CHEBI:15378"/>
        <dbReference type="ChEBI" id="CHEBI:43474"/>
        <dbReference type="ChEBI" id="CHEBI:58069"/>
        <dbReference type="ChEBI" id="CHEBI:60377"/>
    </reaction>
    <physiologicalReaction direction="left-to-right" evidence="2">
        <dbReference type="Rhea" id="RHEA:64881"/>
    </physiologicalReaction>
</comment>
<comment type="catalytic activity">
    <reaction evidence="5">
        <text>GTP + 2 H2O = GMP + 2 phosphate + 2 H(+)</text>
        <dbReference type="Rhea" id="RHEA:64904"/>
        <dbReference type="ChEBI" id="CHEBI:15377"/>
        <dbReference type="ChEBI" id="CHEBI:15378"/>
        <dbReference type="ChEBI" id="CHEBI:37565"/>
        <dbReference type="ChEBI" id="CHEBI:43474"/>
        <dbReference type="ChEBI" id="CHEBI:58115"/>
    </reaction>
    <physiologicalReaction direction="left-to-right" evidence="5">
        <dbReference type="Rhea" id="RHEA:64905"/>
    </physiologicalReaction>
</comment>
<comment type="catalytic activity">
    <reaction evidence="5">
        <text>GTP + H2O = GDP + phosphate + H(+)</text>
        <dbReference type="Rhea" id="RHEA:19669"/>
        <dbReference type="ChEBI" id="CHEBI:15377"/>
        <dbReference type="ChEBI" id="CHEBI:15378"/>
        <dbReference type="ChEBI" id="CHEBI:37565"/>
        <dbReference type="ChEBI" id="CHEBI:43474"/>
        <dbReference type="ChEBI" id="CHEBI:58189"/>
    </reaction>
    <physiologicalReaction direction="left-to-right" evidence="5">
        <dbReference type="Rhea" id="RHEA:19670"/>
    </physiologicalReaction>
</comment>
<comment type="catalytic activity">
    <reaction evidence="5">
        <text>GDP + H2O = GMP + phosphate + H(+)</text>
        <dbReference type="Rhea" id="RHEA:22156"/>
        <dbReference type="ChEBI" id="CHEBI:15377"/>
        <dbReference type="ChEBI" id="CHEBI:15378"/>
        <dbReference type="ChEBI" id="CHEBI:43474"/>
        <dbReference type="ChEBI" id="CHEBI:58115"/>
        <dbReference type="ChEBI" id="CHEBI:58189"/>
    </reaction>
    <physiologicalReaction direction="left-to-right" evidence="5">
        <dbReference type="Rhea" id="RHEA:22157"/>
    </physiologicalReaction>
</comment>
<comment type="catalytic activity">
    <reaction evidence="5">
        <text>ITP + 2 H2O = IMP + 2 phosphate + 2 H(+)</text>
        <dbReference type="Rhea" id="RHEA:77735"/>
        <dbReference type="ChEBI" id="CHEBI:15377"/>
        <dbReference type="ChEBI" id="CHEBI:15378"/>
        <dbReference type="ChEBI" id="CHEBI:43474"/>
        <dbReference type="ChEBI" id="CHEBI:58053"/>
        <dbReference type="ChEBI" id="CHEBI:61402"/>
    </reaction>
    <physiologicalReaction direction="left-to-right" evidence="5">
        <dbReference type="Rhea" id="RHEA:77736"/>
    </physiologicalReaction>
</comment>
<comment type="catalytic activity">
    <reaction evidence="5">
        <text>ITP + H2O = IDP + phosphate + H(+)</text>
        <dbReference type="Rhea" id="RHEA:28330"/>
        <dbReference type="ChEBI" id="CHEBI:15377"/>
        <dbReference type="ChEBI" id="CHEBI:15378"/>
        <dbReference type="ChEBI" id="CHEBI:43474"/>
        <dbReference type="ChEBI" id="CHEBI:58280"/>
        <dbReference type="ChEBI" id="CHEBI:61402"/>
    </reaction>
    <physiologicalReaction direction="left-to-right" evidence="5">
        <dbReference type="Rhea" id="RHEA:28331"/>
    </physiologicalReaction>
</comment>
<comment type="catalytic activity">
    <reaction evidence="5">
        <text>IDP + H2O = IMP + phosphate + H(+)</text>
        <dbReference type="Rhea" id="RHEA:35207"/>
        <dbReference type="ChEBI" id="CHEBI:15377"/>
        <dbReference type="ChEBI" id="CHEBI:15378"/>
        <dbReference type="ChEBI" id="CHEBI:43474"/>
        <dbReference type="ChEBI" id="CHEBI:58053"/>
        <dbReference type="ChEBI" id="CHEBI:58280"/>
    </reaction>
    <physiologicalReaction direction="left-to-right" evidence="5">
        <dbReference type="Rhea" id="RHEA:35208"/>
    </physiologicalReaction>
</comment>
<comment type="catalytic activity">
    <reaction evidence="5">
        <text>UTP + 2 H2O = UMP + 2 phosphate + 2 H(+)</text>
        <dbReference type="Rhea" id="RHEA:64896"/>
        <dbReference type="ChEBI" id="CHEBI:15377"/>
        <dbReference type="ChEBI" id="CHEBI:15378"/>
        <dbReference type="ChEBI" id="CHEBI:43474"/>
        <dbReference type="ChEBI" id="CHEBI:46398"/>
        <dbReference type="ChEBI" id="CHEBI:57865"/>
    </reaction>
    <physiologicalReaction direction="left-to-right" evidence="5">
        <dbReference type="Rhea" id="RHEA:64897"/>
    </physiologicalReaction>
</comment>
<comment type="catalytic activity">
    <reaction evidence="5">
        <text>UTP + H2O = UDP + phosphate + H(+)</text>
        <dbReference type="Rhea" id="RHEA:64900"/>
        <dbReference type="ChEBI" id="CHEBI:15377"/>
        <dbReference type="ChEBI" id="CHEBI:15378"/>
        <dbReference type="ChEBI" id="CHEBI:43474"/>
        <dbReference type="ChEBI" id="CHEBI:46398"/>
        <dbReference type="ChEBI" id="CHEBI:58223"/>
    </reaction>
    <physiologicalReaction direction="left-to-right" evidence="5">
        <dbReference type="Rhea" id="RHEA:64901"/>
    </physiologicalReaction>
</comment>
<comment type="catalytic activity">
    <reaction evidence="5">
        <text>UDP + H2O = UMP + phosphate + H(+)</text>
        <dbReference type="Rhea" id="RHEA:64876"/>
        <dbReference type="ChEBI" id="CHEBI:15377"/>
        <dbReference type="ChEBI" id="CHEBI:15378"/>
        <dbReference type="ChEBI" id="CHEBI:43474"/>
        <dbReference type="ChEBI" id="CHEBI:57865"/>
        <dbReference type="ChEBI" id="CHEBI:58223"/>
    </reaction>
    <physiologicalReaction direction="left-to-right" evidence="5">
        <dbReference type="Rhea" id="RHEA:64877"/>
    </physiologicalReaction>
</comment>
<comment type="cofactor">
    <cofactor evidence="6">
        <name>Ca(2+)</name>
        <dbReference type="ChEBI" id="CHEBI:29108"/>
    </cofactor>
    <cofactor evidence="6">
        <name>Mg(2+)</name>
        <dbReference type="ChEBI" id="CHEBI:18420"/>
    </cofactor>
</comment>
<comment type="biophysicochemical properties">
    <kinetics>
        <KM evidence="5">4.7 uM for ADP</KM>
        <KM evidence="5">10 uM for UTP</KM>
        <KM evidence="5">11.3 uM for UDP</KM>
        <KM evidence="5">9 uM for GTP</KM>
        <KM evidence="5">11.4 uM for GDP</KM>
        <KM evidence="5">48.8 uM for GDP (with 100 uM AMP)</KM>
        <KM evidence="5">13.1 uM for GDP (with 100 uM UMP)</KM>
        <KM evidence="5">149 uM for GDP (with 100 muM hexaammonium heptamolybdate tetrahydrate)</KM>
        <KM evidence="5">10.8 uM for ITP</KM>
        <KM evidence="5">10.5 uM for IDP</KM>
        <KM evidence="5">749.5 uM for thiamine(1+) diphosphate</KM>
    </kinetics>
</comment>
<comment type="subunit">
    <text evidence="3">Homodimer; disulfide-linked.</text>
</comment>
<comment type="subcellular location">
    <subcellularLocation>
        <location evidence="2">Membrane</location>
        <topology evidence="2">Multi-pass membrane protein</topology>
    </subcellularLocation>
    <subcellularLocation>
        <location evidence="2">Membrane</location>
        <location evidence="2">Caveola</location>
    </subcellularLocation>
</comment>
<comment type="tissue specificity">
    <text evidence="6">Expressed in primary neurons and astrocytes, kidney, liver, muscle, thymus, lung and spleen.</text>
</comment>
<comment type="PTM">
    <text evidence="6">N-glycosylated.</text>
</comment>
<comment type="PTM">
    <text evidence="2">The N-terminus is blocked.</text>
</comment>
<comment type="PTM">
    <text evidence="2">Palmitoylated on Cys-13; which is required for caveola targeting.</text>
</comment>
<comment type="similarity">
    <text evidence="10">Belongs to the GDA1/CD39 NTPase family.</text>
</comment>
<accession>P97687</accession>
<proteinExistence type="evidence at protein level"/>
<reference key="1">
    <citation type="journal article" date="1997" name="Brain Res. Mol. Brain Res.">
        <title>Characterization of brain ecto-apyrase: evidence for only one ecto-apyrase (CD39) gene.</title>
        <authorList>
            <person name="Wang T.-F."/>
            <person name="Rosenberg P.A."/>
            <person name="Guidotti G."/>
        </authorList>
    </citation>
    <scope>NUCLEOTIDE SEQUENCE [MRNA]</scope>
    <scope>CATALYTIC ACTIVITY</scope>
    <scope>FUNCTION</scope>
    <scope>COFACTOR</scope>
    <scope>GLYCOSYLATION</scope>
    <scope>TISSUE SPECIFICITY</scope>
    <source>
        <strain>Sprague-Dawley</strain>
        <tissue>Brain</tissue>
        <tissue>Hippocampus</tissue>
    </source>
</reference>
<reference key="2">
    <citation type="journal article" date="1997" name="Neuropharmacology">
        <title>An ecto-ATPase and an ecto-ATP diphosphohydrolase are expressed in rat brain.</title>
        <authorList>
            <person name="Kegel B."/>
            <person name="Braun N."/>
            <person name="Heine P."/>
            <person name="Maliszewski C.R."/>
            <person name="Zimmermann H."/>
        </authorList>
    </citation>
    <scope>NUCLEOTIDE SEQUENCE [MRNA] OF 432-511</scope>
    <scope>FUNCTION</scope>
    <scope>CATALYTIC ACTIVITY</scope>
    <source>
        <strain>Sprague-Dawley</strain>
        <tissue>Brain</tissue>
    </source>
</reference>
<reference evidence="12 13 14" key="3">
    <citation type="journal article" date="2012" name="J. Mol. Biol.">
        <title>Crystallographic evidence for a domain motion in rat nucleoside triphosphate diphosphohydrolase (NTPDase) 1.</title>
        <authorList>
            <person name="Zebisch M."/>
            <person name="Krauss M."/>
            <person name="Schafer P."/>
            <person name="Strater N."/>
        </authorList>
    </citation>
    <scope>X-RAY CRYSTALLOGRAPHY (1.7 ANGSTROMS) OF 38-477</scope>
    <scope>DISULFIDE BONDS</scope>
    <scope>FUNCTION</scope>
    <scope>CATALYTIC ACTIVITY</scope>
    <scope>BIOPHYSICOCHEMICAL PROPERTIES</scope>
</reference>
<name>ENTP1_RAT</name>
<organism>
    <name type="scientific">Rattus norvegicus</name>
    <name type="common">Rat</name>
    <dbReference type="NCBI Taxonomy" id="10116"/>
    <lineage>
        <taxon>Eukaryota</taxon>
        <taxon>Metazoa</taxon>
        <taxon>Chordata</taxon>
        <taxon>Craniata</taxon>
        <taxon>Vertebrata</taxon>
        <taxon>Euteleostomi</taxon>
        <taxon>Mammalia</taxon>
        <taxon>Eutheria</taxon>
        <taxon>Euarchontoglires</taxon>
        <taxon>Glires</taxon>
        <taxon>Rodentia</taxon>
        <taxon>Myomorpha</taxon>
        <taxon>Muroidea</taxon>
        <taxon>Muridae</taxon>
        <taxon>Murinae</taxon>
        <taxon>Rattus</taxon>
    </lineage>
</organism>
<sequence length="511" mass="57408">MEDIKDSKVKRFCSKNILIILGFSSVLAVIALIAVGLTHNKPLPENVKYGIVLDAGSSHTNLYIYKWPAEKENDTGVVQLLEECQVKGPGISKYAQKTDEIAAYLAECMKMSTERIPASKQHQTPVYLGATAGMRLLRMESKQSADEVLAAVSRSLKSYPFDFQGAKIITGQEEGAYGWITINYLLGRFTQEQSWLNFISDSQKQATFGALDLGGSSTQVTFVPLNQTLEAPETSLQFRLYGTDYTVYTHSFLCYGKDQALWQKLAQDIQVSSGGILKDPCFYPGYKKVVNVSELYGTPCTKRFEKKLPFNQFQVQGTGDYEQCHQSILKFFNNSHCPYSQCAFNGVFLPPLQGSFGAFSAFYFVMDFFKKMANDSVSSQEKMTEITKNFCSKPWEEVKASYPTVKEKYLSEYCFSGTYILSLLLQGYNFTGTSWDQIHFMGKIKDSNAGWTLGYMLNLTNMIPAEQPLSPPLPHSTYISLMVLFSLVLVAMVITGLFIFSKPSYFWKEAV</sequence>
<dbReference type="EC" id="3.6.1.5" evidence="5 6 7"/>
<dbReference type="EMBL" id="U81295">
    <property type="protein sequence ID" value="AAC53195.1"/>
    <property type="molecule type" value="mRNA"/>
</dbReference>
<dbReference type="EMBL" id="Y15685">
    <property type="protein sequence ID" value="CAA75730.1"/>
    <property type="molecule type" value="mRNA"/>
</dbReference>
<dbReference type="PDB" id="3ZX0">
    <property type="method" value="X-ray"/>
    <property type="resolution" value="2.50 A"/>
    <property type="chains" value="A/B/C/D=38-189, A/B/C/D=207-477"/>
</dbReference>
<dbReference type="PDB" id="3ZX2">
    <property type="method" value="X-ray"/>
    <property type="resolution" value="1.81 A"/>
    <property type="chains" value="A/B/C/D=38-189, A/B/C/D=207-477"/>
</dbReference>
<dbReference type="PDB" id="3ZX3">
    <property type="method" value="X-ray"/>
    <property type="resolution" value="1.70 A"/>
    <property type="chains" value="A/B/C/D=38-189, A/B/C/D=207-477"/>
</dbReference>
<dbReference type="PDBsum" id="3ZX0"/>
<dbReference type="PDBsum" id="3ZX2"/>
<dbReference type="PDBsum" id="3ZX3"/>
<dbReference type="SMR" id="P97687"/>
<dbReference type="CORUM" id="P97687"/>
<dbReference type="FunCoup" id="P97687">
    <property type="interactions" value="18"/>
</dbReference>
<dbReference type="STRING" id="10116.ENSRNOP00000051602"/>
<dbReference type="BindingDB" id="P97687"/>
<dbReference type="ChEMBL" id="CHEMBL2767"/>
<dbReference type="GuidetoPHARMACOLOGY" id="2888"/>
<dbReference type="GlyCosmos" id="P97687">
    <property type="glycosylation" value="7 sites, No reported glycans"/>
</dbReference>
<dbReference type="GlyGen" id="P97687">
    <property type="glycosylation" value="7 sites"/>
</dbReference>
<dbReference type="iPTMnet" id="P97687"/>
<dbReference type="PhosphoSitePlus" id="P97687"/>
<dbReference type="SwissPalm" id="P97687"/>
<dbReference type="PaxDb" id="10116-ENSRNOP00000051602"/>
<dbReference type="AGR" id="RGD:69265"/>
<dbReference type="RGD" id="69265">
    <property type="gene designation" value="Entpd1"/>
</dbReference>
<dbReference type="eggNOG" id="KOG1386">
    <property type="taxonomic scope" value="Eukaryota"/>
</dbReference>
<dbReference type="InParanoid" id="P97687"/>
<dbReference type="PhylomeDB" id="P97687"/>
<dbReference type="BRENDA" id="3.6.1.5">
    <property type="organism ID" value="5301"/>
</dbReference>
<dbReference type="BRENDA" id="3.6.1.6">
    <property type="organism ID" value="5301"/>
</dbReference>
<dbReference type="Reactome" id="R-RNO-8850843">
    <property type="pathway name" value="Phosphate bond hydrolysis by NTPDase proteins"/>
</dbReference>
<dbReference type="SABIO-RK" id="P97687"/>
<dbReference type="EvolutionaryTrace" id="P97687"/>
<dbReference type="PRO" id="PR:P97687"/>
<dbReference type="Proteomes" id="UP000002494">
    <property type="component" value="Unplaced"/>
</dbReference>
<dbReference type="GO" id="GO:0005604">
    <property type="term" value="C:basement membrane"/>
    <property type="evidence" value="ECO:0000266"/>
    <property type="project" value="RGD"/>
</dbReference>
<dbReference type="GO" id="GO:0016323">
    <property type="term" value="C:basolateral plasma membrane"/>
    <property type="evidence" value="ECO:0000314"/>
    <property type="project" value="RGD"/>
</dbReference>
<dbReference type="GO" id="GO:0005901">
    <property type="term" value="C:caveola"/>
    <property type="evidence" value="ECO:0000250"/>
    <property type="project" value="UniProtKB"/>
</dbReference>
<dbReference type="GO" id="GO:0009986">
    <property type="term" value="C:cell surface"/>
    <property type="evidence" value="ECO:0000314"/>
    <property type="project" value="RGD"/>
</dbReference>
<dbReference type="GO" id="GO:0009897">
    <property type="term" value="C:external side of plasma membrane"/>
    <property type="evidence" value="ECO:0000266"/>
    <property type="project" value="RGD"/>
</dbReference>
<dbReference type="GO" id="GO:0005615">
    <property type="term" value="C:extracellular space"/>
    <property type="evidence" value="ECO:0000314"/>
    <property type="project" value="RGD"/>
</dbReference>
<dbReference type="GO" id="GO:0043025">
    <property type="term" value="C:neuronal cell body"/>
    <property type="evidence" value="ECO:0000314"/>
    <property type="project" value="RGD"/>
</dbReference>
<dbReference type="GO" id="GO:0005886">
    <property type="term" value="C:plasma membrane"/>
    <property type="evidence" value="ECO:0000266"/>
    <property type="project" value="RGD"/>
</dbReference>
<dbReference type="GO" id="GO:0097060">
    <property type="term" value="C:synaptic membrane"/>
    <property type="evidence" value="ECO:0000314"/>
    <property type="project" value="RGD"/>
</dbReference>
<dbReference type="GO" id="GO:0008021">
    <property type="term" value="C:synaptic vesicle"/>
    <property type="evidence" value="ECO:0000314"/>
    <property type="project" value="RGD"/>
</dbReference>
<dbReference type="GO" id="GO:0043262">
    <property type="term" value="F:ADP phosphatase activity"/>
    <property type="evidence" value="ECO:0000314"/>
    <property type="project" value="RGD"/>
</dbReference>
<dbReference type="GO" id="GO:0004050">
    <property type="term" value="F:apyrase activity"/>
    <property type="evidence" value="ECO:0007669"/>
    <property type="project" value="UniProtKB-EC"/>
</dbReference>
<dbReference type="GO" id="GO:0005524">
    <property type="term" value="F:ATP binding"/>
    <property type="evidence" value="ECO:0007669"/>
    <property type="project" value="UniProtKB-KW"/>
</dbReference>
<dbReference type="GO" id="GO:0016887">
    <property type="term" value="F:ATP hydrolysis activity"/>
    <property type="evidence" value="ECO:0000314"/>
    <property type="project" value="RGD"/>
</dbReference>
<dbReference type="GO" id="GO:0036384">
    <property type="term" value="F:CDP phosphatase activity"/>
    <property type="evidence" value="ECO:0007669"/>
    <property type="project" value="RHEA"/>
</dbReference>
<dbReference type="GO" id="GO:0043273">
    <property type="term" value="F:CTPase activity"/>
    <property type="evidence" value="ECO:0007669"/>
    <property type="project" value="RHEA"/>
</dbReference>
<dbReference type="GO" id="GO:0004382">
    <property type="term" value="F:GDP phosphatase activity"/>
    <property type="evidence" value="ECO:0000318"/>
    <property type="project" value="GO_Central"/>
</dbReference>
<dbReference type="GO" id="GO:0003924">
    <property type="term" value="F:GTPase activity"/>
    <property type="evidence" value="ECO:0007669"/>
    <property type="project" value="RHEA"/>
</dbReference>
<dbReference type="GO" id="GO:0042802">
    <property type="term" value="F:identical protein binding"/>
    <property type="evidence" value="ECO:0000353"/>
    <property type="project" value="RGD"/>
</dbReference>
<dbReference type="GO" id="GO:1990003">
    <property type="term" value="F:IDP phosphatase activity"/>
    <property type="evidence" value="ECO:0007669"/>
    <property type="project" value="RHEA"/>
</dbReference>
<dbReference type="GO" id="GO:0103023">
    <property type="term" value="F:ITPase activity"/>
    <property type="evidence" value="ECO:0007669"/>
    <property type="project" value="RHEA"/>
</dbReference>
<dbReference type="GO" id="GO:0017110">
    <property type="term" value="F:nucleoside diphosphate phosphatase activity"/>
    <property type="evidence" value="ECO:0000314"/>
    <property type="project" value="UniProtKB"/>
</dbReference>
<dbReference type="GO" id="GO:0017111">
    <property type="term" value="F:ribonucleoside triphosphate phosphatase activity"/>
    <property type="evidence" value="ECO:0000314"/>
    <property type="project" value="UniProtKB"/>
</dbReference>
<dbReference type="GO" id="GO:0045134">
    <property type="term" value="F:UDP phosphatase activity"/>
    <property type="evidence" value="ECO:0000318"/>
    <property type="project" value="GO_Central"/>
</dbReference>
<dbReference type="GO" id="GO:0046032">
    <property type="term" value="P:ADP catabolic process"/>
    <property type="evidence" value="ECO:0000266"/>
    <property type="project" value="RGD"/>
</dbReference>
<dbReference type="GO" id="GO:0071275">
    <property type="term" value="P:cellular response to aluminum ion"/>
    <property type="evidence" value="ECO:0000270"/>
    <property type="project" value="RGD"/>
</dbReference>
<dbReference type="GO" id="GO:0035457">
    <property type="term" value="P:cellular response to interferon-alpha"/>
    <property type="evidence" value="ECO:0000270"/>
    <property type="project" value="RGD"/>
</dbReference>
<dbReference type="GO" id="GO:0071222">
    <property type="term" value="P:cellular response to lipopolysaccharide"/>
    <property type="evidence" value="ECO:0000270"/>
    <property type="project" value="RGD"/>
</dbReference>
<dbReference type="GO" id="GO:0071356">
    <property type="term" value="P:cellular response to tumor necrosis factor"/>
    <property type="evidence" value="ECO:0000270"/>
    <property type="project" value="RGD"/>
</dbReference>
<dbReference type="GO" id="GO:0007186">
    <property type="term" value="P:G protein-coupled receptor signaling pathway"/>
    <property type="evidence" value="ECO:0000266"/>
    <property type="project" value="RGD"/>
</dbReference>
<dbReference type="GO" id="GO:2001170">
    <property type="term" value="P:negative regulation of ATP biosynthetic process"/>
    <property type="evidence" value="ECO:0000315"/>
    <property type="project" value="RGD"/>
</dbReference>
<dbReference type="GO" id="GO:0033602">
    <property type="term" value="P:negative regulation of dopamine secretion"/>
    <property type="evidence" value="ECO:0000315"/>
    <property type="project" value="RGD"/>
</dbReference>
<dbReference type="GO" id="GO:0009134">
    <property type="term" value="P:nucleoside diphosphate catabolic process"/>
    <property type="evidence" value="ECO:0000318"/>
    <property type="project" value="GO_Central"/>
</dbReference>
<dbReference type="GO" id="GO:0030168">
    <property type="term" value="P:platelet activation"/>
    <property type="evidence" value="ECO:0000266"/>
    <property type="project" value="RGD"/>
</dbReference>
<dbReference type="GO" id="GO:0070527">
    <property type="term" value="P:platelet aggregation"/>
    <property type="evidence" value="ECO:0000250"/>
    <property type="project" value="UniProtKB"/>
</dbReference>
<dbReference type="GO" id="GO:0009181">
    <property type="term" value="P:purine ribonucleoside diphosphate catabolic process"/>
    <property type="evidence" value="ECO:0000266"/>
    <property type="project" value="RGD"/>
</dbReference>
<dbReference type="GO" id="GO:0033198">
    <property type="term" value="P:response to ATP"/>
    <property type="evidence" value="ECO:0000270"/>
    <property type="project" value="RGD"/>
</dbReference>
<dbReference type="GO" id="GO:0010996">
    <property type="term" value="P:response to auditory stimulus"/>
    <property type="evidence" value="ECO:0000270"/>
    <property type="project" value="RGD"/>
</dbReference>
<dbReference type="GO" id="GO:0031000">
    <property type="term" value="P:response to caffeine"/>
    <property type="evidence" value="ECO:0000270"/>
    <property type="project" value="RGD"/>
</dbReference>
<dbReference type="GO" id="GO:0010332">
    <property type="term" value="P:response to gamma radiation"/>
    <property type="evidence" value="ECO:0000270"/>
    <property type="project" value="RGD"/>
</dbReference>
<dbReference type="GO" id="GO:1903576">
    <property type="term" value="P:response to L-arginine"/>
    <property type="evidence" value="ECO:0000270"/>
    <property type="project" value="RGD"/>
</dbReference>
<dbReference type="GO" id="GO:0032496">
    <property type="term" value="P:response to lipopolysaccharide"/>
    <property type="evidence" value="ECO:0000270"/>
    <property type="project" value="RGD"/>
</dbReference>
<dbReference type="GO" id="GO:0010238">
    <property type="term" value="P:response to proline"/>
    <property type="evidence" value="ECO:0000270"/>
    <property type="project" value="RGD"/>
</dbReference>
<dbReference type="CDD" id="cd24110">
    <property type="entry name" value="ASKHA_NBD_NTPDase1"/>
    <property type="match status" value="1"/>
</dbReference>
<dbReference type="FunFam" id="3.30.420.150:FF:000002">
    <property type="entry name" value="Ectonucleoside triphosphate diphosphohydrolase 1"/>
    <property type="match status" value="1"/>
</dbReference>
<dbReference type="FunFam" id="3.30.420.40:FF:000068">
    <property type="entry name" value="Ectonucleoside triphosphate diphosphohydrolase 1"/>
    <property type="match status" value="1"/>
</dbReference>
<dbReference type="Gene3D" id="3.30.420.40">
    <property type="match status" value="1"/>
</dbReference>
<dbReference type="Gene3D" id="3.30.420.150">
    <property type="entry name" value="Exopolyphosphatase. Domain 2"/>
    <property type="match status" value="1"/>
</dbReference>
<dbReference type="InterPro" id="IPR000407">
    <property type="entry name" value="GDA1_CD39_NTPase"/>
</dbReference>
<dbReference type="PANTHER" id="PTHR11782">
    <property type="entry name" value="ADENOSINE/GUANOSINE DIPHOSPHATASE"/>
    <property type="match status" value="1"/>
</dbReference>
<dbReference type="PANTHER" id="PTHR11782:SF32">
    <property type="entry name" value="ECTONUCLEOSIDE TRIPHOSPHATE DIPHOSPHOHYDROLASE 1"/>
    <property type="match status" value="1"/>
</dbReference>
<dbReference type="Pfam" id="PF01150">
    <property type="entry name" value="GDA1_CD39"/>
    <property type="match status" value="1"/>
</dbReference>
<dbReference type="PROSITE" id="PS01238">
    <property type="entry name" value="GDA1_CD39_NTPASE"/>
    <property type="match status" value="1"/>
</dbReference>
<gene>
    <name evidence="11" type="primary">Entpd1</name>
    <name evidence="9" type="synonym">Cd39</name>
</gene>
<evidence type="ECO:0000250" key="1">
    <source>
        <dbReference type="UniProtKB" id="O35795"/>
    </source>
</evidence>
<evidence type="ECO:0000250" key="2">
    <source>
        <dbReference type="UniProtKB" id="P49961"/>
    </source>
</evidence>
<evidence type="ECO:0000250" key="3">
    <source>
        <dbReference type="UniProtKB" id="Q9MYU4"/>
    </source>
</evidence>
<evidence type="ECO:0000255" key="4"/>
<evidence type="ECO:0000269" key="5">
    <source>
    </source>
</evidence>
<evidence type="ECO:0000269" key="6">
    <source>
    </source>
</evidence>
<evidence type="ECO:0000269" key="7">
    <source>
    </source>
</evidence>
<evidence type="ECO:0000303" key="8">
    <source>
    </source>
</evidence>
<evidence type="ECO:0000303" key="9">
    <source>
    </source>
</evidence>
<evidence type="ECO:0000305" key="10"/>
<evidence type="ECO:0000312" key="11">
    <source>
        <dbReference type="RGD" id="69265"/>
    </source>
</evidence>
<evidence type="ECO:0007744" key="12">
    <source>
        <dbReference type="PDB" id="3ZX0"/>
    </source>
</evidence>
<evidence type="ECO:0007744" key="13">
    <source>
        <dbReference type="PDB" id="3ZX2"/>
    </source>
</evidence>
<evidence type="ECO:0007744" key="14">
    <source>
        <dbReference type="PDB" id="3ZX3"/>
    </source>
</evidence>
<evidence type="ECO:0007829" key="15">
    <source>
        <dbReference type="PDB" id="3ZX2"/>
    </source>
</evidence>
<evidence type="ECO:0007829" key="16">
    <source>
        <dbReference type="PDB" id="3ZX3"/>
    </source>
</evidence>
<protein>
    <recommendedName>
        <fullName evidence="10">Ectonucleoside triphosphate diphosphohydrolase 1</fullName>
        <ecNumber evidence="5 6 7">3.6.1.5</ecNumber>
    </recommendedName>
    <alternativeName>
        <fullName evidence="2">ATP diphosphohydrolase</fullName>
        <shortName evidence="2">ATP-DPH</shortName>
        <shortName evidence="2">ATPDase</shortName>
    </alternativeName>
    <alternativeName>
        <fullName evidence="2">Ecto-ATP diphosphohydrolase 1</fullName>
        <shortName>Ecto-ATPDase 1</shortName>
        <shortName>Ecto-ATPase 1</shortName>
    </alternativeName>
    <alternativeName>
        <fullName evidence="9">Ecto-apyrase</fullName>
    </alternativeName>
    <alternativeName>
        <fullName evidence="2">Lymphoid cell activation antigen</fullName>
    </alternativeName>
    <alternativeName>
        <fullName evidence="8">Nucleoside triphosphate diphosphohydrolase 1</fullName>
        <shortName evidence="8">NTPDase1</shortName>
    </alternativeName>
    <cdAntigenName evidence="9">CD39</cdAntigenName>
</protein>